<feature type="signal peptide" evidence="2">
    <location>
        <begin position="1"/>
        <end position="24"/>
    </location>
</feature>
<feature type="chain" id="PRO_0000031786" description="Oligopeptide-binding protein AliB">
    <location>
        <begin position="25"/>
        <end position="652"/>
    </location>
</feature>
<feature type="lipid moiety-binding region" description="N-palmitoyl cysteine" evidence="2">
    <location>
        <position position="25"/>
    </location>
</feature>
<feature type="lipid moiety-binding region" description="S-diacylglycerol cysteine" evidence="2">
    <location>
        <position position="25"/>
    </location>
</feature>
<feature type="strand" evidence="4">
    <location>
        <begin position="34"/>
        <end position="39"/>
    </location>
</feature>
<feature type="turn" evidence="4">
    <location>
        <begin position="48"/>
        <end position="50"/>
    </location>
</feature>
<feature type="helix" evidence="4">
    <location>
        <begin position="54"/>
        <end position="60"/>
    </location>
</feature>
<feature type="turn" evidence="4">
    <location>
        <begin position="61"/>
        <end position="63"/>
    </location>
</feature>
<feature type="strand" evidence="4">
    <location>
        <begin position="67"/>
        <end position="70"/>
    </location>
</feature>
<feature type="strand" evidence="4">
    <location>
        <begin position="76"/>
        <end position="87"/>
    </location>
</feature>
<feature type="strand" evidence="4">
    <location>
        <begin position="92"/>
        <end position="97"/>
    </location>
</feature>
<feature type="strand" evidence="4">
    <location>
        <begin position="102"/>
        <end position="104"/>
    </location>
</feature>
<feature type="strand" evidence="4">
    <location>
        <begin position="110"/>
        <end position="113"/>
    </location>
</feature>
<feature type="helix" evidence="4">
    <location>
        <begin position="117"/>
        <end position="128"/>
    </location>
</feature>
<feature type="helix" evidence="4">
    <location>
        <begin position="134"/>
        <end position="136"/>
    </location>
</feature>
<feature type="turn" evidence="4">
    <location>
        <begin position="137"/>
        <end position="140"/>
    </location>
</feature>
<feature type="helix" evidence="4">
    <location>
        <begin position="144"/>
        <end position="148"/>
    </location>
</feature>
<feature type="helix" evidence="4">
    <location>
        <begin position="155"/>
        <end position="157"/>
    </location>
</feature>
<feature type="strand" evidence="4">
    <location>
        <begin position="158"/>
        <end position="164"/>
    </location>
</feature>
<feature type="strand" evidence="4">
    <location>
        <begin position="167"/>
        <end position="174"/>
    </location>
</feature>
<feature type="helix" evidence="4">
    <location>
        <begin position="179"/>
        <end position="182"/>
    </location>
</feature>
<feature type="helix" evidence="4">
    <location>
        <begin position="186"/>
        <end position="188"/>
    </location>
</feature>
<feature type="helix" evidence="4">
    <location>
        <begin position="193"/>
        <end position="199"/>
    </location>
</feature>
<feature type="helix" evidence="4">
    <location>
        <begin position="200"/>
        <end position="202"/>
    </location>
</feature>
<feature type="strand" evidence="3">
    <location>
        <begin position="205"/>
        <end position="207"/>
    </location>
</feature>
<feature type="helix" evidence="4">
    <location>
        <begin position="208"/>
        <end position="210"/>
    </location>
</feature>
<feature type="strand" evidence="4">
    <location>
        <begin position="215"/>
        <end position="223"/>
    </location>
</feature>
<feature type="turn" evidence="4">
    <location>
        <begin position="224"/>
        <end position="226"/>
    </location>
</feature>
<feature type="strand" evidence="4">
    <location>
        <begin position="227"/>
        <end position="232"/>
    </location>
</feature>
<feature type="helix" evidence="4">
    <location>
        <begin position="239"/>
        <end position="241"/>
    </location>
</feature>
<feature type="strand" evidence="4">
    <location>
        <begin position="245"/>
        <end position="251"/>
    </location>
</feature>
<feature type="helix" evidence="4">
    <location>
        <begin position="259"/>
        <end position="265"/>
    </location>
</feature>
<feature type="strand" evidence="4">
    <location>
        <begin position="270"/>
        <end position="273"/>
    </location>
</feature>
<feature type="helix" evidence="4">
    <location>
        <begin position="281"/>
        <end position="287"/>
    </location>
</feature>
<feature type="turn" evidence="4">
    <location>
        <begin position="288"/>
        <end position="291"/>
    </location>
</feature>
<feature type="strand" evidence="4">
    <location>
        <begin position="301"/>
        <end position="306"/>
    </location>
</feature>
<feature type="helix" evidence="4">
    <location>
        <begin position="321"/>
        <end position="331"/>
    </location>
</feature>
<feature type="helix" evidence="4">
    <location>
        <begin position="334"/>
        <end position="343"/>
    </location>
</feature>
<feature type="helix" evidence="4">
    <location>
        <begin position="346"/>
        <end position="358"/>
    </location>
</feature>
<feature type="helix" evidence="4">
    <location>
        <begin position="359"/>
        <end position="362"/>
    </location>
</feature>
<feature type="strand" evidence="4">
    <location>
        <begin position="366"/>
        <end position="368"/>
    </location>
</feature>
<feature type="strand" evidence="4">
    <location>
        <begin position="372"/>
        <end position="375"/>
    </location>
</feature>
<feature type="helix" evidence="4">
    <location>
        <begin position="380"/>
        <end position="387"/>
    </location>
</feature>
<feature type="helix" evidence="4">
    <location>
        <begin position="388"/>
        <end position="390"/>
    </location>
</feature>
<feature type="helix" evidence="4">
    <location>
        <begin position="393"/>
        <end position="395"/>
    </location>
</feature>
<feature type="strand" evidence="3">
    <location>
        <begin position="402"/>
        <end position="404"/>
    </location>
</feature>
<feature type="helix" evidence="4">
    <location>
        <begin position="410"/>
        <end position="425"/>
    </location>
</feature>
<feature type="turn" evidence="4">
    <location>
        <begin position="426"/>
        <end position="428"/>
    </location>
</feature>
<feature type="strand" evidence="4">
    <location>
        <begin position="431"/>
        <end position="440"/>
    </location>
</feature>
<feature type="helix" evidence="4">
    <location>
        <begin position="444"/>
        <end position="461"/>
    </location>
</feature>
<feature type="turn" evidence="4">
    <location>
        <begin position="463"/>
        <end position="465"/>
    </location>
</feature>
<feature type="strand" evidence="4">
    <location>
        <begin position="466"/>
        <end position="473"/>
    </location>
</feature>
<feature type="helix" evidence="4">
    <location>
        <begin position="475"/>
        <end position="480"/>
    </location>
</feature>
<feature type="turn" evidence="4">
    <location>
        <begin position="481"/>
        <end position="484"/>
    </location>
</feature>
<feature type="helix" evidence="4">
    <location>
        <begin position="488"/>
        <end position="490"/>
    </location>
</feature>
<feature type="strand" evidence="4">
    <location>
        <begin position="494"/>
        <end position="500"/>
    </location>
</feature>
<feature type="strand" evidence="4">
    <location>
        <begin position="503"/>
        <end position="506"/>
    </location>
</feature>
<feature type="helix" evidence="4">
    <location>
        <begin position="508"/>
        <end position="511"/>
    </location>
</feature>
<feature type="helix" evidence="4">
    <location>
        <begin position="512"/>
        <end position="514"/>
    </location>
</feature>
<feature type="turn" evidence="4">
    <location>
        <begin position="516"/>
        <end position="518"/>
    </location>
</feature>
<feature type="turn" evidence="4">
    <location>
        <begin position="520"/>
        <end position="522"/>
    </location>
</feature>
<feature type="helix" evidence="4">
    <location>
        <begin position="523"/>
        <end position="525"/>
    </location>
</feature>
<feature type="strand" evidence="4">
    <location>
        <begin position="529"/>
        <end position="531"/>
    </location>
</feature>
<feature type="helix" evidence="4">
    <location>
        <begin position="534"/>
        <end position="538"/>
    </location>
</feature>
<feature type="helix" evidence="4">
    <location>
        <begin position="541"/>
        <end position="552"/>
    </location>
</feature>
<feature type="helix" evidence="4">
    <location>
        <begin position="557"/>
        <end position="574"/>
    </location>
</feature>
<feature type="strand" evidence="4">
    <location>
        <begin position="576"/>
        <end position="583"/>
    </location>
</feature>
<feature type="strand" evidence="4">
    <location>
        <begin position="587"/>
        <end position="590"/>
    </location>
</feature>
<feature type="strand" evidence="4">
    <location>
        <begin position="601"/>
        <end position="606"/>
    </location>
</feature>
<feature type="helix" evidence="4">
    <location>
        <begin position="622"/>
        <end position="648"/>
    </location>
</feature>
<name>ALIB_STRR6</name>
<reference key="1">
    <citation type="journal article" date="2001" name="J. Bacteriol.">
        <title>Genome of the bacterium Streptococcus pneumoniae strain R6.</title>
        <authorList>
            <person name="Hoskins J."/>
            <person name="Alborn W.E. Jr."/>
            <person name="Arnold J."/>
            <person name="Blaszczak L.C."/>
            <person name="Burgett S."/>
            <person name="DeHoff B.S."/>
            <person name="Estrem S.T."/>
            <person name="Fritz L."/>
            <person name="Fu D.-J."/>
            <person name="Fuller W."/>
            <person name="Geringer C."/>
            <person name="Gilmour R."/>
            <person name="Glass J.S."/>
            <person name="Khoja H."/>
            <person name="Kraft A.R."/>
            <person name="Lagace R.E."/>
            <person name="LeBlanc D.J."/>
            <person name="Lee L.N."/>
            <person name="Lefkowitz E.J."/>
            <person name="Lu J."/>
            <person name="Matsushima P."/>
            <person name="McAhren S.M."/>
            <person name="McHenney M."/>
            <person name="McLeaster K."/>
            <person name="Mundy C.W."/>
            <person name="Nicas T.I."/>
            <person name="Norris F.H."/>
            <person name="O'Gara M."/>
            <person name="Peery R.B."/>
            <person name="Robertson G.T."/>
            <person name="Rockey P."/>
            <person name="Sun P.-M."/>
            <person name="Winkler M.E."/>
            <person name="Yang Y."/>
            <person name="Young-Bellido M."/>
            <person name="Zhao G."/>
            <person name="Zook C.A."/>
            <person name="Baltz R.H."/>
            <person name="Jaskunas S.R."/>
            <person name="Rosteck P.R. Jr."/>
            <person name="Skatrud P.L."/>
            <person name="Glass J.I."/>
        </authorList>
    </citation>
    <scope>NUCLEOTIDE SEQUENCE [LARGE SCALE GENOMIC DNA]</scope>
    <source>
        <strain>ATCC BAA-255 / R6</strain>
    </source>
</reference>
<gene>
    <name type="primary">aliB</name>
    <name type="ordered locus">spr1382</name>
</gene>
<sequence length="652" mass="72562">MKKSKSKYLTLAGLVLGTGVLLSACGNSSTASKTYNYVYSSDPSSLNYLAENRAATSDIVANLVDGLLENDQYGNIIPSLAEDWTVSQDGLTYTYKLRKDAKWFTSEGEEYAPVTAQDFVTGLQYAADKKSEALYLVQDSVAGLDDYITGKTSDFSTVGVKALDDQTVQYTLVKPELYWNSKTLATILFPVNADFLKSKGDDFGKADPSSILYNGPFLMKALVSKSAIEYKKNPNYWDAKNVFVDDVKLTYYDGSDQESLERNFTAGAYTTARLFPNSSSYEGIKEKYKNNIIYSMQNSTSYFFNFNLDRKSYNYTSKTSDIEKKSTQEAVLNKNFRQAINFAFDRTSYGAQSEGKEGATKILRNLVVPPNFVSIKGKDFGEVVASKMVNYGKEWQGINFADGQDPYYNPEKAKAKFAEAKKELEAKGVQFPIHLDKTVEVTDKVGIQGVSSIKQSIESVLGSDNVVIDIQQLTSDEFDSSGYFAQTAAQKDYDLYHGGWGPDYQDPSTYLDIFNTNSGGFLQNLGLEPGEANDKAKAVGLDVYTQMLEEANKEQDPAKRYEKYADIQAWLIDSSLVLPSVSRGGTPSLRRTVPFAAAYGLTGTKGVESYKYLKVQDKIVTTDEYAKAREKWLKEKEESNKKAQEELAKHVK</sequence>
<keyword id="KW-0002">3D-structure</keyword>
<keyword id="KW-1003">Cell membrane</keyword>
<keyword id="KW-0449">Lipoprotein</keyword>
<keyword id="KW-0472">Membrane</keyword>
<keyword id="KW-0564">Palmitate</keyword>
<keyword id="KW-0571">Peptide transport</keyword>
<keyword id="KW-0653">Protein transport</keyword>
<keyword id="KW-1185">Reference proteome</keyword>
<keyword id="KW-0732">Signal</keyword>
<keyword id="KW-0813">Transport</keyword>
<accession>P0A4G1</accession>
<accession>Q51933</accession>
<proteinExistence type="evidence at protein level"/>
<protein>
    <recommendedName>
        <fullName>Oligopeptide-binding protein AliB</fullName>
    </recommendedName>
</protein>
<dbReference type="EMBL" id="AE007317">
    <property type="protein sequence ID" value="AAL00186.1"/>
    <property type="molecule type" value="Genomic_DNA"/>
</dbReference>
<dbReference type="PIR" id="E98044">
    <property type="entry name" value="E98044"/>
</dbReference>
<dbReference type="RefSeq" id="NP_358975.1">
    <property type="nucleotide sequence ID" value="NC_003098.1"/>
</dbReference>
<dbReference type="RefSeq" id="WP_000748873.1">
    <property type="nucleotide sequence ID" value="NC_003098.1"/>
</dbReference>
<dbReference type="PDB" id="8QLJ">
    <property type="method" value="X-ray"/>
    <property type="resolution" value="1.65 A"/>
    <property type="chains" value="A=27-652"/>
</dbReference>
<dbReference type="PDB" id="8QLK">
    <property type="method" value="X-ray"/>
    <property type="resolution" value="2.29 A"/>
    <property type="chains" value="A=27-652"/>
</dbReference>
<dbReference type="PDB" id="8QLM">
    <property type="method" value="X-ray"/>
    <property type="resolution" value="1.66 A"/>
    <property type="chains" value="A/B=27-652"/>
</dbReference>
<dbReference type="PDB" id="8QLV">
    <property type="method" value="X-ray"/>
    <property type="resolution" value="1.49 A"/>
    <property type="chains" value="A=27-652"/>
</dbReference>
<dbReference type="PDBsum" id="8QLJ"/>
<dbReference type="PDBsum" id="8QLK"/>
<dbReference type="PDBsum" id="8QLM"/>
<dbReference type="PDBsum" id="8QLV"/>
<dbReference type="SMR" id="P0A4G1"/>
<dbReference type="STRING" id="171101.spr1382"/>
<dbReference type="KEGG" id="spr:spr1382"/>
<dbReference type="PATRIC" id="fig|171101.6.peg.1497"/>
<dbReference type="eggNOG" id="COG4166">
    <property type="taxonomic scope" value="Bacteria"/>
</dbReference>
<dbReference type="HOGENOM" id="CLU_026497_0_0_9"/>
<dbReference type="Proteomes" id="UP000000586">
    <property type="component" value="Chromosome"/>
</dbReference>
<dbReference type="GO" id="GO:0043190">
    <property type="term" value="C:ATP-binding cassette (ABC) transporter complex"/>
    <property type="evidence" value="ECO:0007669"/>
    <property type="project" value="InterPro"/>
</dbReference>
<dbReference type="GO" id="GO:0042597">
    <property type="term" value="C:periplasmic space"/>
    <property type="evidence" value="ECO:0007669"/>
    <property type="project" value="UniProtKB-ARBA"/>
</dbReference>
<dbReference type="GO" id="GO:1904680">
    <property type="term" value="F:peptide transmembrane transporter activity"/>
    <property type="evidence" value="ECO:0000318"/>
    <property type="project" value="GO_Central"/>
</dbReference>
<dbReference type="GO" id="GO:0015833">
    <property type="term" value="P:peptide transport"/>
    <property type="evidence" value="ECO:0000318"/>
    <property type="project" value="GO_Central"/>
</dbReference>
<dbReference type="GO" id="GO:0015031">
    <property type="term" value="P:protein transport"/>
    <property type="evidence" value="ECO:0007669"/>
    <property type="project" value="UniProtKB-KW"/>
</dbReference>
<dbReference type="CDD" id="cd08504">
    <property type="entry name" value="PBP2_OppA"/>
    <property type="match status" value="1"/>
</dbReference>
<dbReference type="FunFam" id="3.10.105.10:FF:000013">
    <property type="entry name" value="Oligopeptide ABC transporter, oligopeptide-binding protein AliB"/>
    <property type="match status" value="1"/>
</dbReference>
<dbReference type="FunFam" id="3.40.190.10:FF:000273">
    <property type="entry name" value="Oligopeptide ABC transporter, oligopeptide-binding protein AliB"/>
    <property type="match status" value="1"/>
</dbReference>
<dbReference type="Gene3D" id="3.10.105.10">
    <property type="entry name" value="Dipeptide-binding Protein, Domain 3"/>
    <property type="match status" value="1"/>
</dbReference>
<dbReference type="Gene3D" id="3.40.190.10">
    <property type="entry name" value="Periplasmic binding protein-like II"/>
    <property type="match status" value="1"/>
</dbReference>
<dbReference type="InterPro" id="IPR030678">
    <property type="entry name" value="Peptide/Ni-bd"/>
</dbReference>
<dbReference type="InterPro" id="IPR039424">
    <property type="entry name" value="SBP_5"/>
</dbReference>
<dbReference type="InterPro" id="IPR023765">
    <property type="entry name" value="SBP_5_CS"/>
</dbReference>
<dbReference type="InterPro" id="IPR000914">
    <property type="entry name" value="SBP_5_dom"/>
</dbReference>
<dbReference type="PANTHER" id="PTHR30290">
    <property type="entry name" value="PERIPLASMIC BINDING COMPONENT OF ABC TRANSPORTER"/>
    <property type="match status" value="1"/>
</dbReference>
<dbReference type="PANTHER" id="PTHR30290:SF10">
    <property type="entry name" value="PERIPLASMIC OLIGOPEPTIDE-BINDING PROTEIN-RELATED"/>
    <property type="match status" value="1"/>
</dbReference>
<dbReference type="Pfam" id="PF00496">
    <property type="entry name" value="SBP_bac_5"/>
    <property type="match status" value="1"/>
</dbReference>
<dbReference type="PIRSF" id="PIRSF002741">
    <property type="entry name" value="MppA"/>
    <property type="match status" value="1"/>
</dbReference>
<dbReference type="SUPFAM" id="SSF53850">
    <property type="entry name" value="Periplasmic binding protein-like II"/>
    <property type="match status" value="1"/>
</dbReference>
<dbReference type="PROSITE" id="PS51257">
    <property type="entry name" value="PROKAR_LIPOPROTEIN"/>
    <property type="match status" value="1"/>
</dbReference>
<dbReference type="PROSITE" id="PS01040">
    <property type="entry name" value="SBP_BACTERIAL_5"/>
    <property type="match status" value="1"/>
</dbReference>
<comment type="function">
    <text evidence="1">Part of the binding-protein-dependent transport system for oligopeptides; probably an oligopeptide binding protein.</text>
</comment>
<comment type="subcellular location">
    <subcellularLocation>
        <location evidence="2">Cell membrane</location>
        <topology evidence="2">Lipid-anchor</topology>
    </subcellularLocation>
</comment>
<comment type="similarity">
    <text evidence="2">Belongs to the bacterial solute-binding protein 5 family.</text>
</comment>
<evidence type="ECO:0000250" key="1"/>
<evidence type="ECO:0000305" key="2"/>
<evidence type="ECO:0007829" key="3">
    <source>
        <dbReference type="PDB" id="8QLK"/>
    </source>
</evidence>
<evidence type="ECO:0007829" key="4">
    <source>
        <dbReference type="PDB" id="8QLV"/>
    </source>
</evidence>
<organism>
    <name type="scientific">Streptococcus pneumoniae (strain ATCC BAA-255 / R6)</name>
    <dbReference type="NCBI Taxonomy" id="171101"/>
    <lineage>
        <taxon>Bacteria</taxon>
        <taxon>Bacillati</taxon>
        <taxon>Bacillota</taxon>
        <taxon>Bacilli</taxon>
        <taxon>Lactobacillales</taxon>
        <taxon>Streptococcaceae</taxon>
        <taxon>Streptococcus</taxon>
    </lineage>
</organism>